<gene>
    <name evidence="1" type="primary">rnhC</name>
    <name type="ordered locus">LACR_2587</name>
</gene>
<organism>
    <name type="scientific">Lactococcus lactis subsp. cremoris (strain SK11)</name>
    <dbReference type="NCBI Taxonomy" id="272622"/>
    <lineage>
        <taxon>Bacteria</taxon>
        <taxon>Bacillati</taxon>
        <taxon>Bacillota</taxon>
        <taxon>Bacilli</taxon>
        <taxon>Lactobacillales</taxon>
        <taxon>Streptococcaceae</taxon>
        <taxon>Lactococcus</taxon>
        <taxon>Lactococcus cremoris subsp. cremoris</taxon>
    </lineage>
</organism>
<dbReference type="EC" id="3.1.26.4" evidence="1"/>
<dbReference type="EMBL" id="CP000425">
    <property type="protein sequence ID" value="ABJ74005.1"/>
    <property type="molecule type" value="Genomic_DNA"/>
</dbReference>
<dbReference type="RefSeq" id="WP_011677311.1">
    <property type="nucleotide sequence ID" value="NC_008527.1"/>
</dbReference>
<dbReference type="SMR" id="Q02VL7"/>
<dbReference type="KEGG" id="llc:LACR_2587"/>
<dbReference type="HOGENOM" id="CLU_059546_1_0_9"/>
<dbReference type="Proteomes" id="UP000000240">
    <property type="component" value="Chromosome"/>
</dbReference>
<dbReference type="GO" id="GO:0005737">
    <property type="term" value="C:cytoplasm"/>
    <property type="evidence" value="ECO:0007669"/>
    <property type="project" value="UniProtKB-SubCell"/>
</dbReference>
<dbReference type="GO" id="GO:0032299">
    <property type="term" value="C:ribonuclease H2 complex"/>
    <property type="evidence" value="ECO:0007669"/>
    <property type="project" value="TreeGrafter"/>
</dbReference>
<dbReference type="GO" id="GO:0000287">
    <property type="term" value="F:magnesium ion binding"/>
    <property type="evidence" value="ECO:0007669"/>
    <property type="project" value="UniProtKB-UniRule"/>
</dbReference>
<dbReference type="GO" id="GO:0003723">
    <property type="term" value="F:RNA binding"/>
    <property type="evidence" value="ECO:0007669"/>
    <property type="project" value="InterPro"/>
</dbReference>
<dbReference type="GO" id="GO:0004523">
    <property type="term" value="F:RNA-DNA hybrid ribonuclease activity"/>
    <property type="evidence" value="ECO:0007669"/>
    <property type="project" value="UniProtKB-UniRule"/>
</dbReference>
<dbReference type="GO" id="GO:0043137">
    <property type="term" value="P:DNA replication, removal of RNA primer"/>
    <property type="evidence" value="ECO:0007669"/>
    <property type="project" value="TreeGrafter"/>
</dbReference>
<dbReference type="GO" id="GO:0006298">
    <property type="term" value="P:mismatch repair"/>
    <property type="evidence" value="ECO:0007669"/>
    <property type="project" value="TreeGrafter"/>
</dbReference>
<dbReference type="CDD" id="cd06590">
    <property type="entry name" value="RNase_HII_bacteria_HIII_like"/>
    <property type="match status" value="1"/>
</dbReference>
<dbReference type="CDD" id="cd14796">
    <property type="entry name" value="RNAse_HIII_N"/>
    <property type="match status" value="1"/>
</dbReference>
<dbReference type="FunFam" id="3.30.420.10:FF:000047">
    <property type="entry name" value="Ribonuclease HIII"/>
    <property type="match status" value="1"/>
</dbReference>
<dbReference type="Gene3D" id="3.30.420.10">
    <property type="entry name" value="Ribonuclease H-like superfamily/Ribonuclease H"/>
    <property type="match status" value="1"/>
</dbReference>
<dbReference type="Gene3D" id="3.30.310.10">
    <property type="entry name" value="TATA-Binding Protein"/>
    <property type="match status" value="1"/>
</dbReference>
<dbReference type="HAMAP" id="MF_00053">
    <property type="entry name" value="RNase_HIII"/>
    <property type="match status" value="1"/>
</dbReference>
<dbReference type="InterPro" id="IPR001352">
    <property type="entry name" value="RNase_HII/HIII"/>
</dbReference>
<dbReference type="InterPro" id="IPR024567">
    <property type="entry name" value="RNase_HII/HIII_dom"/>
</dbReference>
<dbReference type="InterPro" id="IPR004641">
    <property type="entry name" value="RNase_HIII"/>
</dbReference>
<dbReference type="InterPro" id="IPR024568">
    <property type="entry name" value="RNase_HIII_N"/>
</dbReference>
<dbReference type="InterPro" id="IPR012337">
    <property type="entry name" value="RNaseH-like_sf"/>
</dbReference>
<dbReference type="InterPro" id="IPR036397">
    <property type="entry name" value="RNaseH_sf"/>
</dbReference>
<dbReference type="InterPro" id="IPR012295">
    <property type="entry name" value="TBP_dom_sf"/>
</dbReference>
<dbReference type="NCBIfam" id="TIGR00716">
    <property type="entry name" value="rnhC"/>
    <property type="match status" value="1"/>
</dbReference>
<dbReference type="PANTHER" id="PTHR10954:SF23">
    <property type="entry name" value="RIBONUCLEASE"/>
    <property type="match status" value="1"/>
</dbReference>
<dbReference type="PANTHER" id="PTHR10954">
    <property type="entry name" value="RIBONUCLEASE H2 SUBUNIT A"/>
    <property type="match status" value="1"/>
</dbReference>
<dbReference type="Pfam" id="PF11858">
    <property type="entry name" value="DUF3378"/>
    <property type="match status" value="1"/>
</dbReference>
<dbReference type="Pfam" id="PF01351">
    <property type="entry name" value="RNase_HII"/>
    <property type="match status" value="1"/>
</dbReference>
<dbReference type="PIRSF" id="PIRSF037748">
    <property type="entry name" value="RnhC"/>
    <property type="match status" value="1"/>
</dbReference>
<dbReference type="SUPFAM" id="SSF53098">
    <property type="entry name" value="Ribonuclease H-like"/>
    <property type="match status" value="1"/>
</dbReference>
<dbReference type="PROSITE" id="PS51975">
    <property type="entry name" value="RNASE_H_2"/>
    <property type="match status" value="1"/>
</dbReference>
<evidence type="ECO:0000255" key="1">
    <source>
        <dbReference type="HAMAP-Rule" id="MF_00053"/>
    </source>
</evidence>
<evidence type="ECO:0000255" key="2">
    <source>
        <dbReference type="PROSITE-ProRule" id="PRU01319"/>
    </source>
</evidence>
<feature type="chain" id="PRO_1000031232" description="Ribonuclease HIII">
    <location>
        <begin position="1"/>
        <end position="292"/>
    </location>
</feature>
<feature type="domain" description="RNase H type-2" evidence="2">
    <location>
        <begin position="76"/>
        <end position="292"/>
    </location>
</feature>
<feature type="binding site" evidence="1">
    <location>
        <position position="82"/>
    </location>
    <ligand>
        <name>a divalent metal cation</name>
        <dbReference type="ChEBI" id="CHEBI:60240"/>
    </ligand>
</feature>
<feature type="binding site" evidence="1">
    <location>
        <position position="83"/>
    </location>
    <ligand>
        <name>a divalent metal cation</name>
        <dbReference type="ChEBI" id="CHEBI:60240"/>
    </ligand>
</feature>
<feature type="binding site" evidence="1">
    <location>
        <position position="186"/>
    </location>
    <ligand>
        <name>a divalent metal cation</name>
        <dbReference type="ChEBI" id="CHEBI:60240"/>
    </ligand>
</feature>
<proteinExistence type="inferred from homology"/>
<name>RNH3_LACLS</name>
<protein>
    <recommendedName>
        <fullName evidence="1">Ribonuclease HIII</fullName>
        <shortName evidence="1">RNase HIII</shortName>
        <ecNumber evidence="1">3.1.26.4</ecNumber>
    </recommendedName>
</protein>
<sequence length="292" mass="32096">MNIVLKLSSNACQQLSEKYKSYEQTSKNPYIRFFAKVGKTSISVYTSGKVVFQGSDAEKIASEFGHVAQVVPKKQTNLIGTDEVGNGSYFGGLMVTASFVSDNHLKFLKEMGVADSKKLTDEKICQIAPKLIEEIPHVALVVEPEKYNEVIASGYNAVSIKVALHNQAIYLLEKQLGSQPESIVIDAFTTEANYKKYVSAEKNHPLTNVTLLTKAEDQFLAVAVSSIISRYKFLENLKKLSKESSFTLPSGAENLSDKVAAQIIKSQGIDALNHLAKLHFANTQKAMKIAQL</sequence>
<accession>Q02VL7</accession>
<comment type="function">
    <text evidence="1">Endonuclease that specifically degrades the RNA of RNA-DNA hybrids.</text>
</comment>
<comment type="catalytic activity">
    <reaction evidence="1">
        <text>Endonucleolytic cleavage to 5'-phosphomonoester.</text>
        <dbReference type="EC" id="3.1.26.4"/>
    </reaction>
</comment>
<comment type="cofactor">
    <cofactor evidence="1">
        <name>Mn(2+)</name>
        <dbReference type="ChEBI" id="CHEBI:29035"/>
    </cofactor>
    <cofactor evidence="1">
        <name>Mg(2+)</name>
        <dbReference type="ChEBI" id="CHEBI:18420"/>
    </cofactor>
    <text evidence="1">Manganese or magnesium. Binds 1 divalent metal ion per monomer in the absence of substrate. May bind a second metal ion after substrate binding.</text>
</comment>
<comment type="subcellular location">
    <subcellularLocation>
        <location evidence="1">Cytoplasm</location>
    </subcellularLocation>
</comment>
<comment type="similarity">
    <text evidence="1">Belongs to the RNase HII family. RnhC subfamily.</text>
</comment>
<keyword id="KW-0963">Cytoplasm</keyword>
<keyword id="KW-0255">Endonuclease</keyword>
<keyword id="KW-0378">Hydrolase</keyword>
<keyword id="KW-0460">Magnesium</keyword>
<keyword id="KW-0479">Metal-binding</keyword>
<keyword id="KW-0540">Nuclease</keyword>
<reference key="1">
    <citation type="journal article" date="2006" name="Proc. Natl. Acad. Sci. U.S.A.">
        <title>Comparative genomics of the lactic acid bacteria.</title>
        <authorList>
            <person name="Makarova K.S."/>
            <person name="Slesarev A."/>
            <person name="Wolf Y.I."/>
            <person name="Sorokin A."/>
            <person name="Mirkin B."/>
            <person name="Koonin E.V."/>
            <person name="Pavlov A."/>
            <person name="Pavlova N."/>
            <person name="Karamychev V."/>
            <person name="Polouchine N."/>
            <person name="Shakhova V."/>
            <person name="Grigoriev I."/>
            <person name="Lou Y."/>
            <person name="Rohksar D."/>
            <person name="Lucas S."/>
            <person name="Huang K."/>
            <person name="Goodstein D.M."/>
            <person name="Hawkins T."/>
            <person name="Plengvidhya V."/>
            <person name="Welker D."/>
            <person name="Hughes J."/>
            <person name="Goh Y."/>
            <person name="Benson A."/>
            <person name="Baldwin K."/>
            <person name="Lee J.-H."/>
            <person name="Diaz-Muniz I."/>
            <person name="Dosti B."/>
            <person name="Smeianov V."/>
            <person name="Wechter W."/>
            <person name="Barabote R."/>
            <person name="Lorca G."/>
            <person name="Altermann E."/>
            <person name="Barrangou R."/>
            <person name="Ganesan B."/>
            <person name="Xie Y."/>
            <person name="Rawsthorne H."/>
            <person name="Tamir D."/>
            <person name="Parker C."/>
            <person name="Breidt F."/>
            <person name="Broadbent J.R."/>
            <person name="Hutkins R."/>
            <person name="O'Sullivan D."/>
            <person name="Steele J."/>
            <person name="Unlu G."/>
            <person name="Saier M.H. Jr."/>
            <person name="Klaenhammer T."/>
            <person name="Richardson P."/>
            <person name="Kozyavkin S."/>
            <person name="Weimer B.C."/>
            <person name="Mills D.A."/>
        </authorList>
    </citation>
    <scope>NUCLEOTIDE SEQUENCE [LARGE SCALE GENOMIC DNA]</scope>
    <source>
        <strain>SK11</strain>
    </source>
</reference>